<proteinExistence type="evidence at transcript level"/>
<protein>
    <recommendedName>
        <fullName>Enhancer of mRNA-decapping protein 4</fullName>
    </recommendedName>
</protein>
<sequence>MASVTSIDVDATQHLRDILKLDRTEDSINGNQRKSNSSFSSDLNGLLVTDQVAAVGTSLSDTNLCSAAVLNSERQVICLSGDDSSSCIKITGKDVEIVASHDSNICSKARGSNKVKIQPVAKYDWEQKYYCGNLIAVSNDYIAYATRGANGSAMVRVLSLTTAERILLKGITGSVTDLAFAHLKSNHLACLDEAGSLFVWQLTMTNGKIQDDIVVHIRRPENTVLSIFRRIIWCPYIPEENEENVVDDTSQTIALLHEDKAEVWDLEIIQTNHNTWPVDVSEIKEGFIIVKGHSGRLSEGALSPDGTVLATASHDGYVKFWQIYIEGQDQPRCLHEWKPHNGRPLSCLLFCDNHKKQDPEVPFWRFLITGADQNRELKVWCTVSWTSLQTIQFSPDPFSSGVLPGLKASLDLSAEFLILTDVQRKVLYVMELNQNQDEGKATFTSISEFLLTHPVLSFGIQDVNHCRLRNTEVLPAEEDNNSINQEEILECESVEAAAGVLIKLFCVHTKALQDVQIWFQPHQNAEPAILGTAQPQQENFALPDIQGINMERMPSMQGSMHGSQSDLCRISTDFLLLPTDSVPKLMTPDAFMSPSASLQQGITSPGSIISTLTTVTPISSTSNSDTVLARPSEEMTLSTMLQLDTSATLSNPSRDGNPLSNSRNPAVVIPGMSETIVSIPAAQMPSSNHPLELQDLDPLVVPQASPTRERSPDVISSASTAMPQDIPEIASETLQRSYISSVPSGLSVEGCESSHHSDSMSSAASALHLLSPHNLSSLDHGHRPIIIGSSVVENERISAPSLLESTIQEDNVDIGLPQPWPAAPDITKETRNNLVDSSRNGQDRGDSSFHRHNYHLLQQHDSQDASAEQSDHDDEVASLASISGSFGGKGQHLLIKDWKSKLSPRSSPKLRRKSKKDEMELAKSPRVSDHLVNLELQEELLCMLRSQQKELSDLRQNQLELMKKLTDHMDAVQSSIMGHVERVIDTQQEQEQRRVERILSDGHERNGQLQEYLSQQLSHSLSGSLSNRVDKIIREEMKKTVSQCISKTLDPVAAQLTSSVAAKVTAVEGVLKENVTKMVKSKNVTDAIGRVAADSLQTVIHSAYREAFQSIVLPAFERSCQSMFQQVNNSFKQGTQDYMQQLEAHLRSIKMNEQETRDPVVTQLQQMVDSLQTVTDQLASNITSNVRSEVQHQLHIAVGNMQDSILSQVQRIIKEEVSHAMKEQQAAVTSSIMQAMRSAAGTPIPSSHMDFHSQQTHILQLMQQGQINQAFQQALTASDLNLILYVCETVDPQQVFGQHPCPLTQPVLLSLIQQLSFDFGSRTEIKLNYLEEAVMNLDHSDPVTRDHMGTVLNQVRQKLYQFLQAEPQNALQKPARRLLIMLQGLVPPTLS</sequence>
<feature type="chain" id="PRO_0000278966" description="Enhancer of mRNA-decapping protein 4">
    <location>
        <begin position="1"/>
        <end position="1391"/>
    </location>
</feature>
<feature type="repeat" description="WD 1">
    <location>
        <begin position="170"/>
        <end position="210"/>
    </location>
</feature>
<feature type="repeat" description="WD 2">
    <location>
        <begin position="226"/>
        <end position="274"/>
    </location>
</feature>
<feature type="repeat" description="WD 3">
    <location>
        <begin position="292"/>
        <end position="331"/>
    </location>
</feature>
<feature type="repeat" description="WD 4">
    <location>
        <begin position="340"/>
        <end position="390"/>
    </location>
</feature>
<feature type="region of interest" description="Disordered" evidence="3">
    <location>
        <begin position="703"/>
        <end position="724"/>
    </location>
</feature>
<feature type="region of interest" description="Disordered" evidence="3">
    <location>
        <begin position="897"/>
        <end position="924"/>
    </location>
</feature>
<feature type="coiled-coil region" evidence="2">
    <location>
        <begin position="935"/>
        <end position="968"/>
    </location>
</feature>
<feature type="compositionally biased region" description="Basic and acidic residues" evidence="3">
    <location>
        <begin position="915"/>
        <end position="924"/>
    </location>
</feature>
<comment type="function">
    <text evidence="1">In the process of mRNA degradation, seems to play a role in mRNA decapping.</text>
</comment>
<comment type="subcellular location">
    <subcellularLocation>
        <location evidence="1">Cytoplasm</location>
        <location evidence="1">P-body</location>
    </subcellularLocation>
    <subcellularLocation>
        <location evidence="1">Nucleus</location>
    </subcellularLocation>
</comment>
<comment type="similarity">
    <text evidence="4">Belongs to the WD repeat EDC4 family.</text>
</comment>
<gene>
    <name type="primary">edc4</name>
</gene>
<organism>
    <name type="scientific">Xenopus laevis</name>
    <name type="common">African clawed frog</name>
    <dbReference type="NCBI Taxonomy" id="8355"/>
    <lineage>
        <taxon>Eukaryota</taxon>
        <taxon>Metazoa</taxon>
        <taxon>Chordata</taxon>
        <taxon>Craniata</taxon>
        <taxon>Vertebrata</taxon>
        <taxon>Euteleostomi</taxon>
        <taxon>Amphibia</taxon>
        <taxon>Batrachia</taxon>
        <taxon>Anura</taxon>
        <taxon>Pipoidea</taxon>
        <taxon>Pipidae</taxon>
        <taxon>Xenopodinae</taxon>
        <taxon>Xenopus</taxon>
        <taxon>Xenopus</taxon>
    </lineage>
</organism>
<accession>Q7ZXT3</accession>
<name>EDC4_XENLA</name>
<reference key="1">
    <citation type="submission" date="2003-01" db="EMBL/GenBank/DDBJ databases">
        <authorList>
            <consortium name="NIH - Xenopus Gene Collection (XGC) project"/>
        </authorList>
    </citation>
    <scope>NUCLEOTIDE SEQUENCE [LARGE SCALE MRNA]</scope>
    <source>
        <tissue>Embryo</tissue>
    </source>
</reference>
<evidence type="ECO:0000250" key="1">
    <source>
        <dbReference type="UniProtKB" id="Q6P2E9"/>
    </source>
</evidence>
<evidence type="ECO:0000255" key="2"/>
<evidence type="ECO:0000256" key="3">
    <source>
        <dbReference type="SAM" id="MobiDB-lite"/>
    </source>
</evidence>
<evidence type="ECO:0000305" key="4"/>
<keyword id="KW-0175">Coiled coil</keyword>
<keyword id="KW-0963">Cytoplasm</keyword>
<keyword id="KW-0539">Nucleus</keyword>
<keyword id="KW-1185">Reference proteome</keyword>
<keyword id="KW-0677">Repeat</keyword>
<keyword id="KW-0853">WD repeat</keyword>
<dbReference type="EMBL" id="BC044263">
    <property type="protein sequence ID" value="AAH44263.1"/>
    <property type="molecule type" value="mRNA"/>
</dbReference>
<dbReference type="RefSeq" id="NP_001079552.1">
    <property type="nucleotide sequence ID" value="NM_001086083.1"/>
</dbReference>
<dbReference type="DNASU" id="379239"/>
<dbReference type="GeneID" id="379239"/>
<dbReference type="KEGG" id="xla:379239"/>
<dbReference type="AGR" id="Xenbase:XB-GENE-5839889"/>
<dbReference type="CTD" id="379239"/>
<dbReference type="Xenbase" id="XB-GENE-5839889">
    <property type="gene designation" value="edc4.L"/>
</dbReference>
<dbReference type="OMA" id="TREHMGT"/>
<dbReference type="OrthoDB" id="21128at2759"/>
<dbReference type="Proteomes" id="UP000186698">
    <property type="component" value="Chromosome 4L"/>
</dbReference>
<dbReference type="Bgee" id="379239">
    <property type="expression patterns" value="Expressed in egg cell and 19 other cell types or tissues"/>
</dbReference>
<dbReference type="GO" id="GO:0005634">
    <property type="term" value="C:nucleus"/>
    <property type="evidence" value="ECO:0007669"/>
    <property type="project" value="UniProtKB-SubCell"/>
</dbReference>
<dbReference type="GO" id="GO:0000932">
    <property type="term" value="C:P-body"/>
    <property type="evidence" value="ECO:0000318"/>
    <property type="project" value="GO_Central"/>
</dbReference>
<dbReference type="GO" id="GO:0031087">
    <property type="term" value="P:deadenylation-independent decapping of nuclear-transcribed mRNA"/>
    <property type="evidence" value="ECO:0000318"/>
    <property type="project" value="GO_Central"/>
</dbReference>
<dbReference type="FunFam" id="1.10.220.100:FF:000001">
    <property type="entry name" value="Enhancer of mRNA-decapping protein 4"/>
    <property type="match status" value="1"/>
</dbReference>
<dbReference type="FunFam" id="2.130.10.10:FF:000138">
    <property type="entry name" value="Enhancer of mRNA-decapping protein 4"/>
    <property type="match status" value="1"/>
</dbReference>
<dbReference type="Gene3D" id="6.10.140.270">
    <property type="match status" value="1"/>
</dbReference>
<dbReference type="Gene3D" id="1.20.120.20">
    <property type="entry name" value="Apolipoprotein"/>
    <property type="match status" value="1"/>
</dbReference>
<dbReference type="Gene3D" id="1.10.220.100">
    <property type="entry name" value="conserved c-terminal region of ge- 1"/>
    <property type="match status" value="1"/>
</dbReference>
<dbReference type="Gene3D" id="2.130.10.10">
    <property type="entry name" value="YVTN repeat-like/Quinoprotein amine dehydrogenase"/>
    <property type="match status" value="1"/>
</dbReference>
<dbReference type="InterPro" id="IPR045152">
    <property type="entry name" value="EDC4-like"/>
</dbReference>
<dbReference type="InterPro" id="IPR049404">
    <property type="entry name" value="EDC4_C"/>
</dbReference>
<dbReference type="InterPro" id="IPR044938">
    <property type="entry name" value="EDC4_C_sf"/>
</dbReference>
<dbReference type="InterPro" id="IPR032401">
    <property type="entry name" value="EDC4_WD40"/>
</dbReference>
<dbReference type="InterPro" id="IPR015943">
    <property type="entry name" value="WD40/YVTN_repeat-like_dom_sf"/>
</dbReference>
<dbReference type="InterPro" id="IPR036322">
    <property type="entry name" value="WD40_repeat_dom_sf"/>
</dbReference>
<dbReference type="InterPro" id="IPR001680">
    <property type="entry name" value="WD40_rpt"/>
</dbReference>
<dbReference type="PANTHER" id="PTHR15598">
    <property type="entry name" value="ENHANCER OF MRNA-DECAPPING PROTEIN 4"/>
    <property type="match status" value="1"/>
</dbReference>
<dbReference type="PANTHER" id="PTHR15598:SF5">
    <property type="entry name" value="ENHANCER OF MRNA-DECAPPING PROTEIN 4"/>
    <property type="match status" value="1"/>
</dbReference>
<dbReference type="Pfam" id="PF21289">
    <property type="entry name" value="EDC4_C"/>
    <property type="match status" value="1"/>
</dbReference>
<dbReference type="Pfam" id="PF16529">
    <property type="entry name" value="Ge1_WD40"/>
    <property type="match status" value="1"/>
</dbReference>
<dbReference type="SMART" id="SM00320">
    <property type="entry name" value="WD40"/>
    <property type="match status" value="3"/>
</dbReference>
<dbReference type="SUPFAM" id="SSF50978">
    <property type="entry name" value="WD40 repeat-like"/>
    <property type="match status" value="1"/>
</dbReference>
<dbReference type="PROSITE" id="PS50082">
    <property type="entry name" value="WD_REPEATS_2"/>
    <property type="match status" value="1"/>
</dbReference>
<dbReference type="PROSITE" id="PS50294">
    <property type="entry name" value="WD_REPEATS_REGION"/>
    <property type="match status" value="1"/>
</dbReference>